<comment type="function">
    <text evidence="1">Involved in iron-sulfur (Fe-S) cluster assembly. May act as a regulator of Fe-S biogenesis.</text>
</comment>
<comment type="similarity">
    <text evidence="1">Belongs to the frataxin family.</text>
</comment>
<dbReference type="EMBL" id="BX640423">
    <property type="protein sequence ID" value="CAE39810.1"/>
    <property type="molecule type" value="Genomic_DNA"/>
</dbReference>
<dbReference type="RefSeq" id="WP_003806945.1">
    <property type="nucleotide sequence ID" value="NC_002928.3"/>
</dbReference>
<dbReference type="SMR" id="Q7W2B9"/>
<dbReference type="GeneID" id="93206300"/>
<dbReference type="KEGG" id="bpa:BPP0069"/>
<dbReference type="HOGENOM" id="CLU_080880_3_0_4"/>
<dbReference type="Proteomes" id="UP000001421">
    <property type="component" value="Chromosome"/>
</dbReference>
<dbReference type="GO" id="GO:0005737">
    <property type="term" value="C:cytoplasm"/>
    <property type="evidence" value="ECO:0007669"/>
    <property type="project" value="UniProtKB-ARBA"/>
</dbReference>
<dbReference type="GO" id="GO:0008199">
    <property type="term" value="F:ferric iron binding"/>
    <property type="evidence" value="ECO:0007669"/>
    <property type="project" value="InterPro"/>
</dbReference>
<dbReference type="GO" id="GO:0016226">
    <property type="term" value="P:iron-sulfur cluster assembly"/>
    <property type="evidence" value="ECO:0007669"/>
    <property type="project" value="UniProtKB-UniRule"/>
</dbReference>
<dbReference type="Gene3D" id="3.30.920.10">
    <property type="entry name" value="Frataxin/CyaY"/>
    <property type="match status" value="1"/>
</dbReference>
<dbReference type="HAMAP" id="MF_00142">
    <property type="entry name" value="CyaY"/>
    <property type="match status" value="1"/>
</dbReference>
<dbReference type="InterPro" id="IPR047584">
    <property type="entry name" value="CyaY"/>
</dbReference>
<dbReference type="InterPro" id="IPR002908">
    <property type="entry name" value="Frataxin/CyaY"/>
</dbReference>
<dbReference type="InterPro" id="IPR036524">
    <property type="entry name" value="Frataxin/CyaY_sf"/>
</dbReference>
<dbReference type="InterPro" id="IPR020895">
    <property type="entry name" value="Frataxin_CS"/>
</dbReference>
<dbReference type="NCBIfam" id="TIGR03421">
    <property type="entry name" value="FeS_CyaY"/>
    <property type="match status" value="1"/>
</dbReference>
<dbReference type="Pfam" id="PF01491">
    <property type="entry name" value="Frataxin_Cyay"/>
    <property type="match status" value="1"/>
</dbReference>
<dbReference type="SMART" id="SM01219">
    <property type="entry name" value="Frataxin_Cyay"/>
    <property type="match status" value="1"/>
</dbReference>
<dbReference type="SUPFAM" id="SSF55387">
    <property type="entry name" value="Frataxin/Nqo15-like"/>
    <property type="match status" value="1"/>
</dbReference>
<dbReference type="PROSITE" id="PS01344">
    <property type="entry name" value="FRATAXIN_1"/>
    <property type="match status" value="1"/>
</dbReference>
<dbReference type="PROSITE" id="PS50810">
    <property type="entry name" value="FRATAXIN_2"/>
    <property type="match status" value="1"/>
</dbReference>
<sequence length="109" mass="11821">MTETEFLALVDQVLDSIESQADDWAAGLDVDIEATRSGNVLTLVFEDGTQVVVNAQAAMQELWVAARSGGFHYRYDGQHWNDTRGGPRLPDALSQICSEAAGVPVSVRL</sequence>
<gene>
    <name evidence="1" type="primary">cyaY</name>
    <name type="ordered locus">BPP0069</name>
</gene>
<reference key="1">
    <citation type="journal article" date="2003" name="Nat. Genet.">
        <title>Comparative analysis of the genome sequences of Bordetella pertussis, Bordetella parapertussis and Bordetella bronchiseptica.</title>
        <authorList>
            <person name="Parkhill J."/>
            <person name="Sebaihia M."/>
            <person name="Preston A."/>
            <person name="Murphy L.D."/>
            <person name="Thomson N.R."/>
            <person name="Harris D.E."/>
            <person name="Holden M.T.G."/>
            <person name="Churcher C.M."/>
            <person name="Bentley S.D."/>
            <person name="Mungall K.L."/>
            <person name="Cerdeno-Tarraga A.-M."/>
            <person name="Temple L."/>
            <person name="James K.D."/>
            <person name="Harris B."/>
            <person name="Quail M.A."/>
            <person name="Achtman M."/>
            <person name="Atkin R."/>
            <person name="Baker S."/>
            <person name="Basham D."/>
            <person name="Bason N."/>
            <person name="Cherevach I."/>
            <person name="Chillingworth T."/>
            <person name="Collins M."/>
            <person name="Cronin A."/>
            <person name="Davis P."/>
            <person name="Doggett J."/>
            <person name="Feltwell T."/>
            <person name="Goble A."/>
            <person name="Hamlin N."/>
            <person name="Hauser H."/>
            <person name="Holroyd S."/>
            <person name="Jagels K."/>
            <person name="Leather S."/>
            <person name="Moule S."/>
            <person name="Norberczak H."/>
            <person name="O'Neil S."/>
            <person name="Ormond D."/>
            <person name="Price C."/>
            <person name="Rabbinowitsch E."/>
            <person name="Rutter S."/>
            <person name="Sanders M."/>
            <person name="Saunders D."/>
            <person name="Seeger K."/>
            <person name="Sharp S."/>
            <person name="Simmonds M."/>
            <person name="Skelton J."/>
            <person name="Squares R."/>
            <person name="Squares S."/>
            <person name="Stevens K."/>
            <person name="Unwin L."/>
            <person name="Whitehead S."/>
            <person name="Barrell B.G."/>
            <person name="Maskell D.J."/>
        </authorList>
    </citation>
    <scope>NUCLEOTIDE SEQUENCE [LARGE SCALE GENOMIC DNA]</scope>
    <source>
        <strain>12822 / ATCC BAA-587 / NCTC 13253</strain>
    </source>
</reference>
<feature type="chain" id="PRO_0000193928" description="Iron-sulfur cluster assembly protein CyaY">
    <location>
        <begin position="1"/>
        <end position="109"/>
    </location>
</feature>
<accession>Q7W2B9</accession>
<protein>
    <recommendedName>
        <fullName evidence="1">Iron-sulfur cluster assembly protein CyaY</fullName>
    </recommendedName>
</protein>
<evidence type="ECO:0000255" key="1">
    <source>
        <dbReference type="HAMAP-Rule" id="MF_00142"/>
    </source>
</evidence>
<organism>
    <name type="scientific">Bordetella parapertussis (strain 12822 / ATCC BAA-587 / NCTC 13253)</name>
    <dbReference type="NCBI Taxonomy" id="257311"/>
    <lineage>
        <taxon>Bacteria</taxon>
        <taxon>Pseudomonadati</taxon>
        <taxon>Pseudomonadota</taxon>
        <taxon>Betaproteobacteria</taxon>
        <taxon>Burkholderiales</taxon>
        <taxon>Alcaligenaceae</taxon>
        <taxon>Bordetella</taxon>
    </lineage>
</organism>
<proteinExistence type="inferred from homology"/>
<name>CYAY_BORPA</name>
<keyword id="KW-0408">Iron</keyword>
<keyword id="KW-0479">Metal-binding</keyword>